<organism>
    <name type="scientific">Halobacterium salinarum (strain ATCC 29341 / DSM 671 / R1)</name>
    <dbReference type="NCBI Taxonomy" id="478009"/>
    <lineage>
        <taxon>Archaea</taxon>
        <taxon>Methanobacteriati</taxon>
        <taxon>Methanobacteriota</taxon>
        <taxon>Stenosarchaea group</taxon>
        <taxon>Halobacteria</taxon>
        <taxon>Halobacteriales</taxon>
        <taxon>Halobacteriaceae</taxon>
        <taxon>Halobacterium</taxon>
        <taxon>Halobacterium salinarum NRC-34001</taxon>
    </lineage>
</organism>
<evidence type="ECO:0000255" key="1">
    <source>
        <dbReference type="HAMAP-Rule" id="MF_00028"/>
    </source>
</evidence>
<keyword id="KW-0169">Cobalamin biosynthesis</keyword>
<keyword id="KW-0315">Glutamine amidotransferase</keyword>
<sequence>MTAGEDCRTILVAGTASHVGKSTVAAGLCRLLADRGLSVAPFKAQNMSNNARAVPVADGAPPAADPWGEIGVSQYVQARAARTAASTDHNPVLLKPRGDAESQLVVDGRAVGHYSAGSYYESHWADARDAAAAAHARLAADNDVVVAEGAGSIAELNLHDRDLANLETARFADATILLVVDIERGGAFASLHGTLALLPDDIRDRVAGAVITKFRGDRSLLDPGITEIEARTGVPVLGVIPHDDPGLPAEDSVSLPDPSERVVDGGQDGVPDAASVTVAVPHLPHISNFTDLAPLARTPGVRVAYQPLDAPLAAADAVVLPGTKNTVDDLRAAREAGLGRALRAFDGPIVGLCGGYQMLGDRITDAATESTADDLGAVDGVGVLPVETAFQPDKRVEAVTRELADCGALGGATGAVTGYEIHMGRTTVPDGVPQPVGPASAARGRVLGTYLHGLFGNDAARRGFRDAVFAAAGVEQPAPADTPDQSPSDAAAALVDAHVDLDPLGVPPAPDA</sequence>
<protein>
    <recommendedName>
        <fullName evidence="1">Probable cobyric acid synthase</fullName>
    </recommendedName>
</protein>
<reference key="1">
    <citation type="journal article" date="2008" name="Genomics">
        <title>Evolution in the laboratory: the genome of Halobacterium salinarum strain R1 compared to that of strain NRC-1.</title>
        <authorList>
            <person name="Pfeiffer F."/>
            <person name="Schuster S.C."/>
            <person name="Broicher A."/>
            <person name="Falb M."/>
            <person name="Palm P."/>
            <person name="Rodewald K."/>
            <person name="Ruepp A."/>
            <person name="Soppa J."/>
            <person name="Tittor J."/>
            <person name="Oesterhelt D."/>
        </authorList>
    </citation>
    <scope>NUCLEOTIDE SEQUENCE [LARGE SCALE GENOMIC DNA]</scope>
    <source>
        <strain>ATCC 29341 / DSM 671 / R1</strain>
    </source>
</reference>
<name>COBQ_HALS3</name>
<accession>B0R5X2</accession>
<feature type="chain" id="PRO_1000090228" description="Probable cobyric acid synthase">
    <location>
        <begin position="1"/>
        <end position="512"/>
    </location>
</feature>
<feature type="domain" description="GATase cobBQ-type" evidence="1">
    <location>
        <begin position="275"/>
        <end position="460"/>
    </location>
</feature>
<feature type="active site" description="Nucleophile" evidence="1">
    <location>
        <position position="353"/>
    </location>
</feature>
<feature type="active site" evidence="1">
    <location>
        <position position="452"/>
    </location>
</feature>
<gene>
    <name evidence="1" type="primary">cobQ</name>
    <name type="ordered locus">OE_3246F</name>
</gene>
<proteinExistence type="inferred from homology"/>
<comment type="function">
    <text evidence="1">Catalyzes amidations at positions B, D, E, and G on adenosylcobyrinic A,C-diamide. NH(2) groups are provided by glutamine, and one molecule of ATP is hydrogenolyzed for each amidation.</text>
</comment>
<comment type="pathway">
    <text evidence="1">Cofactor biosynthesis; adenosylcobalamin biosynthesis.</text>
</comment>
<comment type="similarity">
    <text evidence="1">Belongs to the CobB/CobQ family. CobQ subfamily.</text>
</comment>
<dbReference type="EMBL" id="AM774415">
    <property type="protein sequence ID" value="CAP14139.1"/>
    <property type="molecule type" value="Genomic_DNA"/>
</dbReference>
<dbReference type="RefSeq" id="WP_010903150.1">
    <property type="nucleotide sequence ID" value="NC_010364.1"/>
</dbReference>
<dbReference type="SMR" id="B0R5X2"/>
<dbReference type="EnsemblBacteria" id="CAP14139">
    <property type="protein sequence ID" value="CAP14139"/>
    <property type="gene ID" value="OE_3246F"/>
</dbReference>
<dbReference type="KEGG" id="hsl:OE_3246F"/>
<dbReference type="HOGENOM" id="CLU_019250_2_2_2"/>
<dbReference type="PhylomeDB" id="B0R5X2"/>
<dbReference type="UniPathway" id="UPA00148"/>
<dbReference type="Proteomes" id="UP000001321">
    <property type="component" value="Chromosome"/>
</dbReference>
<dbReference type="GO" id="GO:0015420">
    <property type="term" value="F:ABC-type vitamin B12 transporter activity"/>
    <property type="evidence" value="ECO:0007669"/>
    <property type="project" value="UniProtKB-UniRule"/>
</dbReference>
<dbReference type="GO" id="GO:0003824">
    <property type="term" value="F:catalytic activity"/>
    <property type="evidence" value="ECO:0007669"/>
    <property type="project" value="InterPro"/>
</dbReference>
<dbReference type="GO" id="GO:0009236">
    <property type="term" value="P:cobalamin biosynthetic process"/>
    <property type="evidence" value="ECO:0007669"/>
    <property type="project" value="UniProtKB-UniRule"/>
</dbReference>
<dbReference type="CDD" id="cd01750">
    <property type="entry name" value="GATase1_CobQ"/>
    <property type="match status" value="1"/>
</dbReference>
<dbReference type="Gene3D" id="3.40.50.880">
    <property type="match status" value="1"/>
</dbReference>
<dbReference type="Gene3D" id="3.40.50.300">
    <property type="entry name" value="P-loop containing nucleotide triphosphate hydrolases"/>
    <property type="match status" value="1"/>
</dbReference>
<dbReference type="HAMAP" id="MF_00028">
    <property type="entry name" value="CobQ"/>
    <property type="match status" value="1"/>
</dbReference>
<dbReference type="InterPro" id="IPR029062">
    <property type="entry name" value="Class_I_gatase-like"/>
</dbReference>
<dbReference type="InterPro" id="IPR002586">
    <property type="entry name" value="CobQ/CobB/MinD/ParA_Nub-bd_dom"/>
</dbReference>
<dbReference type="InterPro" id="IPR033949">
    <property type="entry name" value="CobQ_GATase1"/>
</dbReference>
<dbReference type="InterPro" id="IPR004459">
    <property type="entry name" value="CobQ_synth"/>
</dbReference>
<dbReference type="InterPro" id="IPR011698">
    <property type="entry name" value="GATase_3"/>
</dbReference>
<dbReference type="InterPro" id="IPR027417">
    <property type="entry name" value="P-loop_NTPase"/>
</dbReference>
<dbReference type="NCBIfam" id="TIGR00313">
    <property type="entry name" value="cobQ"/>
    <property type="match status" value="1"/>
</dbReference>
<dbReference type="NCBIfam" id="NF001989">
    <property type="entry name" value="PRK00784.1"/>
    <property type="match status" value="1"/>
</dbReference>
<dbReference type="PANTHER" id="PTHR21343:SF1">
    <property type="entry name" value="COBYRIC ACID SYNTHASE"/>
    <property type="match status" value="1"/>
</dbReference>
<dbReference type="PANTHER" id="PTHR21343">
    <property type="entry name" value="DETHIOBIOTIN SYNTHETASE"/>
    <property type="match status" value="1"/>
</dbReference>
<dbReference type="Pfam" id="PF01656">
    <property type="entry name" value="CbiA"/>
    <property type="match status" value="1"/>
</dbReference>
<dbReference type="Pfam" id="PF07685">
    <property type="entry name" value="GATase_3"/>
    <property type="match status" value="1"/>
</dbReference>
<dbReference type="SUPFAM" id="SSF52317">
    <property type="entry name" value="Class I glutamine amidotransferase-like"/>
    <property type="match status" value="1"/>
</dbReference>
<dbReference type="SUPFAM" id="SSF52540">
    <property type="entry name" value="P-loop containing nucleoside triphosphate hydrolases"/>
    <property type="match status" value="1"/>
</dbReference>
<dbReference type="PROSITE" id="PS51274">
    <property type="entry name" value="GATASE_COBBQ"/>
    <property type="match status" value="1"/>
</dbReference>